<proteinExistence type="inferred from homology"/>
<name>RPOB_BRUSI</name>
<feature type="chain" id="PRO_1000086363" description="DNA-directed RNA polymerase subunit beta">
    <location>
        <begin position="1"/>
        <end position="1377"/>
    </location>
</feature>
<organism>
    <name type="scientific">Brucella suis (strain ATCC 23445 / NCTC 10510)</name>
    <dbReference type="NCBI Taxonomy" id="470137"/>
    <lineage>
        <taxon>Bacteria</taxon>
        <taxon>Pseudomonadati</taxon>
        <taxon>Pseudomonadota</taxon>
        <taxon>Alphaproteobacteria</taxon>
        <taxon>Hyphomicrobiales</taxon>
        <taxon>Brucellaceae</taxon>
        <taxon>Brucella/Ochrobactrum group</taxon>
        <taxon>Brucella</taxon>
    </lineage>
</organism>
<reference key="1">
    <citation type="submission" date="2007-12" db="EMBL/GenBank/DDBJ databases">
        <title>Brucella suis ATCC 23445 whole genome shotgun sequencing project.</title>
        <authorList>
            <person name="Setubal J.C."/>
            <person name="Bowns C."/>
            <person name="Boyle S."/>
            <person name="Crasta O.R."/>
            <person name="Czar M.J."/>
            <person name="Dharmanolla C."/>
            <person name="Gillespie J.J."/>
            <person name="Kenyon R.W."/>
            <person name="Lu J."/>
            <person name="Mane S."/>
            <person name="Mohapatra S."/>
            <person name="Nagrani S."/>
            <person name="Purkayastha A."/>
            <person name="Rajasimha H.K."/>
            <person name="Shallom J.M."/>
            <person name="Shallom S."/>
            <person name="Shukla M."/>
            <person name="Snyder E.E."/>
            <person name="Sobral B.W."/>
            <person name="Wattam A.R."/>
            <person name="Will R."/>
            <person name="Williams K."/>
            <person name="Yoo H."/>
            <person name="Bruce D."/>
            <person name="Detter C."/>
            <person name="Munk C."/>
            <person name="Brettin T.S."/>
        </authorList>
    </citation>
    <scope>NUCLEOTIDE SEQUENCE [LARGE SCALE GENOMIC DNA]</scope>
    <source>
        <strain>ATCC 23445 / NCTC 10510</strain>
    </source>
</reference>
<accession>B0CH41</accession>
<sequence length="1377" mass="153669">MAQTHSFNGRKRVRKFFGKIPEVAEMPNLIEVQKASYDQFLMVEEPSGGRPDEGLQAVFKSVFPIQDFSGASMLEFVRYEFDPPKFDVDECRQRDLTYSAPLKVTLRLIVFDIDEDTGAKSIKDIKEQDVYMGDMPLMTDNGTFIVNGTERVIVSQMHRSPGVFFDHDKGKTHSSGKLLFAARVIPYRGSWLDIEFDSKDIVYARIDRRRKLPATTLLMALGMDGEEILSTFYKTVTYTRDGDNWRIPYSAERFKGMKIISDLVDADTGEVVLEAGKKLTARAAKQLAEKGLKAIKATEDDLFGSYLAEDVVNYATGEIYLEAGDEIDEKVLKTLIDTGETEINVLDIDHVNIGAYIRNTLAVDKNESRQEALFDIYRVMRPGEPPTMDSAEAMFHSLFFDSERYDLSAVGRVKMNMRLDLDAEDTVRVLRKEDILAVVKMLVELRDGRGEIDDIDNLGNRRVRSVGELMENQYRVGLLRMERAIKERMSSIEIDTVMPQDLINAKPAAAAVREFFGSSQLSQFMDQTNPLSEITHKRRLSALGPGGLTRERAGFEVRDVHPTHYGRICPIETPEGPNIGLINSLATFARVNKYGFIESPYRKVVDGKVTNDVVYLSAMEEAKHSVAQANVELDEQGGFVDEFVICRHAGEVMMAPRENVDLMDVSPKQLVSVAAALIPFLENDDANRALMGSNMQRQAVPLVRAEAPFVGTGMEPIVARDSGAAIAARRGGIVDQVDATRIVIRATEELDPSKSGVDIYRLQKFQRSNQSTCINQRPLVRVGDRIHKGDIIADGPSTDLGDLALGRNVLVAFMPWNGYNYEDSILLSEKIVSDDVFTSIHIEEFEVAARDTKLGPEEITRDIPNVSEEALKNLDEAGIVYIGAEVHPGDILVGKITPKGESPMTPEEKLLRAIFGEKASDVRDTSMRMPPGTYGTVVEVRVFNRHGVEKDERAMAIEREEIERLAKDRDDEQAILDRNVYGRLADMIDGKVAAAGPKGFKKGTTITRELMTEYPRSQWWQFAVEDEKLQGELEALRSQYDDSKKLLEARFMDKVEKVQRGDEMPPGVMKMVKVFVAVKRKIQPGDKMAGRHGNKGVVSRILPVEDMPFLEDGTHADIVLNPLGVPSRMNVGQILETHLGWACAGMGKKIGELLDVYRKTANIEPLRQTLEHIYPDNDRNEPVRSYDDDAILMLANQVKRGVSIATPVFDGAVEADINAMLTDAGLATSGQSTLYDGRTGEPFDRQVTMGYIYMLKLHHLVDDKIHARSIGPYSLVTQQPLGGKAQFGGQRFGEMEVWALEAYGAAYTLQEMLTVKSDDVAGRTKVYEAIVRGDDTFEAGIPESFNVLVKEMRSLGLNVELDDTREAEQPALPDAAE</sequence>
<dbReference type="EC" id="2.7.7.6" evidence="1"/>
<dbReference type="EMBL" id="CP000911">
    <property type="protein sequence ID" value="ABY38342.1"/>
    <property type="molecule type" value="Genomic_DNA"/>
</dbReference>
<dbReference type="RefSeq" id="WP_002966855.1">
    <property type="nucleotide sequence ID" value="NC_010169.1"/>
</dbReference>
<dbReference type="SMR" id="B0CH41"/>
<dbReference type="GeneID" id="97533517"/>
<dbReference type="KEGG" id="bmt:BSUIS_A1291"/>
<dbReference type="HOGENOM" id="CLU_000524_4_0_5"/>
<dbReference type="PRO" id="PR:B0CH41"/>
<dbReference type="Proteomes" id="UP000008545">
    <property type="component" value="Chromosome I"/>
</dbReference>
<dbReference type="GO" id="GO:0000428">
    <property type="term" value="C:DNA-directed RNA polymerase complex"/>
    <property type="evidence" value="ECO:0007669"/>
    <property type="project" value="UniProtKB-KW"/>
</dbReference>
<dbReference type="GO" id="GO:0003677">
    <property type="term" value="F:DNA binding"/>
    <property type="evidence" value="ECO:0007669"/>
    <property type="project" value="UniProtKB-UniRule"/>
</dbReference>
<dbReference type="GO" id="GO:0003899">
    <property type="term" value="F:DNA-directed RNA polymerase activity"/>
    <property type="evidence" value="ECO:0007669"/>
    <property type="project" value="UniProtKB-UniRule"/>
</dbReference>
<dbReference type="GO" id="GO:0032549">
    <property type="term" value="F:ribonucleoside binding"/>
    <property type="evidence" value="ECO:0007669"/>
    <property type="project" value="InterPro"/>
</dbReference>
<dbReference type="GO" id="GO:0006351">
    <property type="term" value="P:DNA-templated transcription"/>
    <property type="evidence" value="ECO:0007669"/>
    <property type="project" value="UniProtKB-UniRule"/>
</dbReference>
<dbReference type="CDD" id="cd00653">
    <property type="entry name" value="RNA_pol_B_RPB2"/>
    <property type="match status" value="1"/>
</dbReference>
<dbReference type="FunFam" id="2.40.50.100:FF:000006">
    <property type="entry name" value="DNA-directed RNA polymerase subunit beta"/>
    <property type="match status" value="1"/>
</dbReference>
<dbReference type="FunFam" id="3.90.1800.10:FF:000001">
    <property type="entry name" value="DNA-directed RNA polymerase subunit beta"/>
    <property type="match status" value="1"/>
</dbReference>
<dbReference type="Gene3D" id="2.40.50.100">
    <property type="match status" value="1"/>
</dbReference>
<dbReference type="Gene3D" id="2.40.50.150">
    <property type="match status" value="1"/>
</dbReference>
<dbReference type="Gene3D" id="3.90.1100.10">
    <property type="match status" value="2"/>
</dbReference>
<dbReference type="Gene3D" id="2.30.150.10">
    <property type="entry name" value="DNA-directed RNA polymerase, beta subunit, external 1 domain"/>
    <property type="match status" value="1"/>
</dbReference>
<dbReference type="Gene3D" id="2.40.270.10">
    <property type="entry name" value="DNA-directed RNA polymerase, subunit 2, domain 6"/>
    <property type="match status" value="2"/>
</dbReference>
<dbReference type="Gene3D" id="3.90.1800.10">
    <property type="entry name" value="RNA polymerase alpha subunit dimerisation domain"/>
    <property type="match status" value="1"/>
</dbReference>
<dbReference type="Gene3D" id="3.90.1110.10">
    <property type="entry name" value="RNA polymerase Rpb2, domain 2"/>
    <property type="match status" value="2"/>
</dbReference>
<dbReference type="HAMAP" id="MF_01321">
    <property type="entry name" value="RNApol_bact_RpoB"/>
    <property type="match status" value="1"/>
</dbReference>
<dbReference type="InterPro" id="IPR042107">
    <property type="entry name" value="DNA-dir_RNA_pol_bsu_ext_1_sf"/>
</dbReference>
<dbReference type="InterPro" id="IPR019462">
    <property type="entry name" value="DNA-dir_RNA_pol_bsu_external_1"/>
</dbReference>
<dbReference type="InterPro" id="IPR015712">
    <property type="entry name" value="DNA-dir_RNA_pol_su2"/>
</dbReference>
<dbReference type="InterPro" id="IPR007120">
    <property type="entry name" value="DNA-dir_RNAP_su2_dom"/>
</dbReference>
<dbReference type="InterPro" id="IPR037033">
    <property type="entry name" value="DNA-dir_RNAP_su2_hyb_sf"/>
</dbReference>
<dbReference type="InterPro" id="IPR010243">
    <property type="entry name" value="RNA_pol_bsu_bac"/>
</dbReference>
<dbReference type="InterPro" id="IPR007121">
    <property type="entry name" value="RNA_pol_bsu_CS"/>
</dbReference>
<dbReference type="InterPro" id="IPR007644">
    <property type="entry name" value="RNA_pol_bsu_protrusion"/>
</dbReference>
<dbReference type="InterPro" id="IPR007642">
    <property type="entry name" value="RNA_pol_Rpb2_2"/>
</dbReference>
<dbReference type="InterPro" id="IPR037034">
    <property type="entry name" value="RNA_pol_Rpb2_2_sf"/>
</dbReference>
<dbReference type="InterPro" id="IPR007645">
    <property type="entry name" value="RNA_pol_Rpb2_3"/>
</dbReference>
<dbReference type="InterPro" id="IPR007641">
    <property type="entry name" value="RNA_pol_Rpb2_7"/>
</dbReference>
<dbReference type="InterPro" id="IPR014724">
    <property type="entry name" value="RNA_pol_RPB2_OB-fold"/>
</dbReference>
<dbReference type="NCBIfam" id="NF001616">
    <property type="entry name" value="PRK00405.1"/>
    <property type="match status" value="1"/>
</dbReference>
<dbReference type="NCBIfam" id="TIGR02013">
    <property type="entry name" value="rpoB"/>
    <property type="match status" value="1"/>
</dbReference>
<dbReference type="PANTHER" id="PTHR20856">
    <property type="entry name" value="DNA-DIRECTED RNA POLYMERASE I SUBUNIT 2"/>
    <property type="match status" value="1"/>
</dbReference>
<dbReference type="Pfam" id="PF04563">
    <property type="entry name" value="RNA_pol_Rpb2_1"/>
    <property type="match status" value="1"/>
</dbReference>
<dbReference type="Pfam" id="PF04561">
    <property type="entry name" value="RNA_pol_Rpb2_2"/>
    <property type="match status" value="2"/>
</dbReference>
<dbReference type="Pfam" id="PF04565">
    <property type="entry name" value="RNA_pol_Rpb2_3"/>
    <property type="match status" value="1"/>
</dbReference>
<dbReference type="Pfam" id="PF10385">
    <property type="entry name" value="RNA_pol_Rpb2_45"/>
    <property type="match status" value="1"/>
</dbReference>
<dbReference type="Pfam" id="PF00562">
    <property type="entry name" value="RNA_pol_Rpb2_6"/>
    <property type="match status" value="1"/>
</dbReference>
<dbReference type="Pfam" id="PF04560">
    <property type="entry name" value="RNA_pol_Rpb2_7"/>
    <property type="match status" value="1"/>
</dbReference>
<dbReference type="SUPFAM" id="SSF64484">
    <property type="entry name" value="beta and beta-prime subunits of DNA dependent RNA-polymerase"/>
    <property type="match status" value="1"/>
</dbReference>
<dbReference type="PROSITE" id="PS01166">
    <property type="entry name" value="RNA_POL_BETA"/>
    <property type="match status" value="1"/>
</dbReference>
<comment type="function">
    <text evidence="1">DNA-dependent RNA polymerase catalyzes the transcription of DNA into RNA using the four ribonucleoside triphosphates as substrates.</text>
</comment>
<comment type="catalytic activity">
    <reaction evidence="1">
        <text>RNA(n) + a ribonucleoside 5'-triphosphate = RNA(n+1) + diphosphate</text>
        <dbReference type="Rhea" id="RHEA:21248"/>
        <dbReference type="Rhea" id="RHEA-COMP:14527"/>
        <dbReference type="Rhea" id="RHEA-COMP:17342"/>
        <dbReference type="ChEBI" id="CHEBI:33019"/>
        <dbReference type="ChEBI" id="CHEBI:61557"/>
        <dbReference type="ChEBI" id="CHEBI:140395"/>
        <dbReference type="EC" id="2.7.7.6"/>
    </reaction>
</comment>
<comment type="subunit">
    <text evidence="1">The RNAP catalytic core consists of 2 alpha, 1 beta, 1 beta' and 1 omega subunit. When a sigma factor is associated with the core the holoenzyme is formed, which can initiate transcription.</text>
</comment>
<comment type="similarity">
    <text evidence="1">Belongs to the RNA polymerase beta chain family.</text>
</comment>
<gene>
    <name evidence="1" type="primary">rpoB</name>
    <name type="ordered locus">BSUIS_A1291</name>
</gene>
<evidence type="ECO:0000255" key="1">
    <source>
        <dbReference type="HAMAP-Rule" id="MF_01321"/>
    </source>
</evidence>
<protein>
    <recommendedName>
        <fullName evidence="1">DNA-directed RNA polymerase subunit beta</fullName>
        <shortName evidence="1">RNAP subunit beta</shortName>
        <ecNumber evidence="1">2.7.7.6</ecNumber>
    </recommendedName>
    <alternativeName>
        <fullName evidence="1">RNA polymerase subunit beta</fullName>
    </alternativeName>
    <alternativeName>
        <fullName evidence="1">Transcriptase subunit beta</fullName>
    </alternativeName>
</protein>
<keyword id="KW-0240">DNA-directed RNA polymerase</keyword>
<keyword id="KW-0548">Nucleotidyltransferase</keyword>
<keyword id="KW-0804">Transcription</keyword>
<keyword id="KW-0808">Transferase</keyword>